<feature type="chain" id="PRO_0000338821" description="Translation initiation factor IF-1">
    <location>
        <begin position="1"/>
        <end position="85"/>
    </location>
</feature>
<feature type="domain" description="S1-like" evidence="1">
    <location>
        <begin position="1"/>
        <end position="72"/>
    </location>
</feature>
<gene>
    <name evidence="1" type="primary">infA</name>
    <name type="ordered locus">ELI_02485</name>
</gene>
<reference key="1">
    <citation type="journal article" date="2009" name="J. Bacteriol.">
        <title>Complete genome sequence of Erythrobacter litoralis HTCC2594.</title>
        <authorList>
            <person name="Oh H.M."/>
            <person name="Giovannoni S.J."/>
            <person name="Ferriera S."/>
            <person name="Johnson J."/>
            <person name="Cho J.C."/>
        </authorList>
    </citation>
    <scope>NUCLEOTIDE SEQUENCE [LARGE SCALE GENOMIC DNA]</scope>
    <source>
        <strain>HTCC2594</strain>
    </source>
</reference>
<dbReference type="EMBL" id="CP000157">
    <property type="protein sequence ID" value="ABC62589.1"/>
    <property type="molecule type" value="Genomic_DNA"/>
</dbReference>
<dbReference type="RefSeq" id="WP_011413465.1">
    <property type="nucleotide sequence ID" value="NC_007722.1"/>
</dbReference>
<dbReference type="SMR" id="Q2NCK2"/>
<dbReference type="STRING" id="314225.ELI_02485"/>
<dbReference type="KEGG" id="eli:ELI_02485"/>
<dbReference type="eggNOG" id="COG0361">
    <property type="taxonomic scope" value="Bacteria"/>
</dbReference>
<dbReference type="HOGENOM" id="CLU_151267_1_0_5"/>
<dbReference type="OrthoDB" id="9803250at2"/>
<dbReference type="Proteomes" id="UP000008808">
    <property type="component" value="Chromosome"/>
</dbReference>
<dbReference type="GO" id="GO:0005829">
    <property type="term" value="C:cytosol"/>
    <property type="evidence" value="ECO:0007669"/>
    <property type="project" value="TreeGrafter"/>
</dbReference>
<dbReference type="GO" id="GO:0043022">
    <property type="term" value="F:ribosome binding"/>
    <property type="evidence" value="ECO:0007669"/>
    <property type="project" value="UniProtKB-UniRule"/>
</dbReference>
<dbReference type="GO" id="GO:0019843">
    <property type="term" value="F:rRNA binding"/>
    <property type="evidence" value="ECO:0007669"/>
    <property type="project" value="UniProtKB-UniRule"/>
</dbReference>
<dbReference type="GO" id="GO:0003743">
    <property type="term" value="F:translation initiation factor activity"/>
    <property type="evidence" value="ECO:0007669"/>
    <property type="project" value="UniProtKB-UniRule"/>
</dbReference>
<dbReference type="CDD" id="cd04451">
    <property type="entry name" value="S1_IF1"/>
    <property type="match status" value="1"/>
</dbReference>
<dbReference type="FunFam" id="2.40.50.140:FF:000002">
    <property type="entry name" value="Translation initiation factor IF-1"/>
    <property type="match status" value="1"/>
</dbReference>
<dbReference type="Gene3D" id="2.40.50.140">
    <property type="entry name" value="Nucleic acid-binding proteins"/>
    <property type="match status" value="1"/>
</dbReference>
<dbReference type="HAMAP" id="MF_00075">
    <property type="entry name" value="IF_1"/>
    <property type="match status" value="1"/>
</dbReference>
<dbReference type="InterPro" id="IPR012340">
    <property type="entry name" value="NA-bd_OB-fold"/>
</dbReference>
<dbReference type="InterPro" id="IPR006196">
    <property type="entry name" value="RNA-binding_domain_S1_IF1"/>
</dbReference>
<dbReference type="InterPro" id="IPR003029">
    <property type="entry name" value="S1_domain"/>
</dbReference>
<dbReference type="InterPro" id="IPR004368">
    <property type="entry name" value="TIF_IF1"/>
</dbReference>
<dbReference type="NCBIfam" id="TIGR00008">
    <property type="entry name" value="infA"/>
    <property type="match status" value="1"/>
</dbReference>
<dbReference type="PANTHER" id="PTHR33370">
    <property type="entry name" value="TRANSLATION INITIATION FACTOR IF-1, CHLOROPLASTIC"/>
    <property type="match status" value="1"/>
</dbReference>
<dbReference type="PANTHER" id="PTHR33370:SF1">
    <property type="entry name" value="TRANSLATION INITIATION FACTOR IF-1, CHLOROPLASTIC"/>
    <property type="match status" value="1"/>
</dbReference>
<dbReference type="Pfam" id="PF01176">
    <property type="entry name" value="eIF-1a"/>
    <property type="match status" value="1"/>
</dbReference>
<dbReference type="SMART" id="SM00316">
    <property type="entry name" value="S1"/>
    <property type="match status" value="1"/>
</dbReference>
<dbReference type="SUPFAM" id="SSF50249">
    <property type="entry name" value="Nucleic acid-binding proteins"/>
    <property type="match status" value="1"/>
</dbReference>
<dbReference type="PROSITE" id="PS50832">
    <property type="entry name" value="S1_IF1_TYPE"/>
    <property type="match status" value="1"/>
</dbReference>
<evidence type="ECO:0000255" key="1">
    <source>
        <dbReference type="HAMAP-Rule" id="MF_00075"/>
    </source>
</evidence>
<sequence>MAKEELLEMRGKVVELLPNAMFRVELENGHEVLGHTAGKMRKNRIRVLVGDEVLCELTPYDLTKARITYRFMPGRGGPGQGPGPQ</sequence>
<name>IF1_ERYLH</name>
<comment type="function">
    <text evidence="1">One of the essential components for the initiation of protein synthesis. Stabilizes the binding of IF-2 and IF-3 on the 30S subunit to which N-formylmethionyl-tRNA(fMet) subsequently binds. Helps modulate mRNA selection, yielding the 30S pre-initiation complex (PIC). Upon addition of the 50S ribosomal subunit IF-1, IF-2 and IF-3 are released leaving the mature 70S translation initiation complex.</text>
</comment>
<comment type="subunit">
    <text evidence="1">Component of the 30S ribosomal translation pre-initiation complex which assembles on the 30S ribosome in the order IF-2 and IF-3, IF-1 and N-formylmethionyl-tRNA(fMet); mRNA recruitment can occur at any time during PIC assembly.</text>
</comment>
<comment type="subcellular location">
    <subcellularLocation>
        <location evidence="1">Cytoplasm</location>
    </subcellularLocation>
</comment>
<comment type="similarity">
    <text evidence="1">Belongs to the IF-1 family.</text>
</comment>
<keyword id="KW-0963">Cytoplasm</keyword>
<keyword id="KW-0396">Initiation factor</keyword>
<keyword id="KW-0648">Protein biosynthesis</keyword>
<keyword id="KW-1185">Reference proteome</keyword>
<keyword id="KW-0694">RNA-binding</keyword>
<keyword id="KW-0699">rRNA-binding</keyword>
<proteinExistence type="inferred from homology"/>
<accession>Q2NCK2</accession>
<protein>
    <recommendedName>
        <fullName evidence="1">Translation initiation factor IF-1</fullName>
    </recommendedName>
</protein>
<organism>
    <name type="scientific">Erythrobacter litoralis (strain HTCC2594)</name>
    <dbReference type="NCBI Taxonomy" id="314225"/>
    <lineage>
        <taxon>Bacteria</taxon>
        <taxon>Pseudomonadati</taxon>
        <taxon>Pseudomonadota</taxon>
        <taxon>Alphaproteobacteria</taxon>
        <taxon>Sphingomonadales</taxon>
        <taxon>Erythrobacteraceae</taxon>
        <taxon>Erythrobacter/Porphyrobacter group</taxon>
        <taxon>Erythrobacter</taxon>
    </lineage>
</organism>